<evidence type="ECO:0000250" key="1"/>
<evidence type="ECO:0000255" key="2"/>
<evidence type="ECO:0000255" key="3">
    <source>
        <dbReference type="PROSITE-ProRule" id="PRU00041"/>
    </source>
</evidence>
<evidence type="ECO:0000255" key="4">
    <source>
        <dbReference type="PROSITE-ProRule" id="PRU00167"/>
    </source>
</evidence>
<evidence type="ECO:0000256" key="5">
    <source>
        <dbReference type="SAM" id="MobiDB-lite"/>
    </source>
</evidence>
<evidence type="ECO:0000269" key="6">
    <source>
    </source>
</evidence>
<comment type="function">
    <text evidence="1">May function as a Ras GTPase-activating protein.</text>
</comment>
<comment type="induction">
    <text evidence="6">Up-regulated by P.aeruginosa, PAO1 strain and PA14 strain infection.</text>
</comment>
<gene>
    <name type="primary">ngap</name>
    <name type="ORF">DDB_G0278483</name>
</gene>
<reference key="1">
    <citation type="journal article" date="2005" name="Nature">
        <title>The genome of the social amoeba Dictyostelium discoideum.</title>
        <authorList>
            <person name="Eichinger L."/>
            <person name="Pachebat J.A."/>
            <person name="Gloeckner G."/>
            <person name="Rajandream M.A."/>
            <person name="Sucgang R."/>
            <person name="Berriman M."/>
            <person name="Song J."/>
            <person name="Olsen R."/>
            <person name="Szafranski K."/>
            <person name="Xu Q."/>
            <person name="Tunggal B."/>
            <person name="Kummerfeld S."/>
            <person name="Madera M."/>
            <person name="Konfortov B.A."/>
            <person name="Rivero F."/>
            <person name="Bankier A.T."/>
            <person name="Lehmann R."/>
            <person name="Hamlin N."/>
            <person name="Davies R."/>
            <person name="Gaudet P."/>
            <person name="Fey P."/>
            <person name="Pilcher K."/>
            <person name="Chen G."/>
            <person name="Saunders D."/>
            <person name="Sodergren E.J."/>
            <person name="Davis P."/>
            <person name="Kerhornou A."/>
            <person name="Nie X."/>
            <person name="Hall N."/>
            <person name="Anjard C."/>
            <person name="Hemphill L."/>
            <person name="Bason N."/>
            <person name="Farbrother P."/>
            <person name="Desany B."/>
            <person name="Just E."/>
            <person name="Morio T."/>
            <person name="Rost R."/>
            <person name="Churcher C.M."/>
            <person name="Cooper J."/>
            <person name="Haydock S."/>
            <person name="van Driessche N."/>
            <person name="Cronin A."/>
            <person name="Goodhead I."/>
            <person name="Muzny D.M."/>
            <person name="Mourier T."/>
            <person name="Pain A."/>
            <person name="Lu M."/>
            <person name="Harper D."/>
            <person name="Lindsay R."/>
            <person name="Hauser H."/>
            <person name="James K.D."/>
            <person name="Quiles M."/>
            <person name="Madan Babu M."/>
            <person name="Saito T."/>
            <person name="Buchrieser C."/>
            <person name="Wardroper A."/>
            <person name="Felder M."/>
            <person name="Thangavelu M."/>
            <person name="Johnson D."/>
            <person name="Knights A."/>
            <person name="Loulseged H."/>
            <person name="Mungall K.L."/>
            <person name="Oliver K."/>
            <person name="Price C."/>
            <person name="Quail M.A."/>
            <person name="Urushihara H."/>
            <person name="Hernandez J."/>
            <person name="Rabbinowitsch E."/>
            <person name="Steffen D."/>
            <person name="Sanders M."/>
            <person name="Ma J."/>
            <person name="Kohara Y."/>
            <person name="Sharp S."/>
            <person name="Simmonds M.N."/>
            <person name="Spiegler S."/>
            <person name="Tivey A."/>
            <person name="Sugano S."/>
            <person name="White B."/>
            <person name="Walker D."/>
            <person name="Woodward J.R."/>
            <person name="Winckler T."/>
            <person name="Tanaka Y."/>
            <person name="Shaulsky G."/>
            <person name="Schleicher M."/>
            <person name="Weinstock G.M."/>
            <person name="Rosenthal A."/>
            <person name="Cox E.C."/>
            <person name="Chisholm R.L."/>
            <person name="Gibbs R.A."/>
            <person name="Loomis W.F."/>
            <person name="Platzer M."/>
            <person name="Kay R.R."/>
            <person name="Williams J.G."/>
            <person name="Dear P.H."/>
            <person name="Noegel A.A."/>
            <person name="Barrell B.G."/>
            <person name="Kuspa A."/>
        </authorList>
    </citation>
    <scope>NUCLEOTIDE SEQUENCE [LARGE SCALE GENOMIC DNA]</scope>
    <source>
        <strain>AX4</strain>
    </source>
</reference>
<reference key="2">
    <citation type="journal article" date="2008" name="BMC Microbiol.">
        <title>Dictyostelium transcriptional responses to Pseudomonas aeruginosa: common and specific effects from PAO1 and PA14 strains.</title>
        <authorList>
            <person name="Carilla-Latorre S."/>
            <person name="Calvo-Garrido J."/>
            <person name="Bloomfield G."/>
            <person name="Skelton J."/>
            <person name="Kay R.R."/>
            <person name="Ivens A."/>
            <person name="Martinez J.L."/>
            <person name="Escalante R."/>
        </authorList>
    </citation>
    <scope>INDUCTION [LARGE SCALE ANALYSIS]</scope>
</reference>
<feature type="chain" id="PRO_0000393333" description="Probable Ras GTPase-activating-like protein ngap">
    <location>
        <begin position="1"/>
        <end position="877"/>
    </location>
</feature>
<feature type="domain" description="C2" evidence="3">
    <location>
        <begin position="72"/>
        <end position="218"/>
    </location>
</feature>
<feature type="domain" description="Ras-GAP" evidence="4">
    <location>
        <begin position="591"/>
        <end position="802"/>
    </location>
</feature>
<feature type="region of interest" description="Disordered" evidence="5">
    <location>
        <begin position="350"/>
        <end position="456"/>
    </location>
</feature>
<feature type="coiled-coil region" evidence="2">
    <location>
        <begin position="820"/>
        <end position="848"/>
    </location>
</feature>
<feature type="compositionally biased region" description="Low complexity" evidence="5">
    <location>
        <begin position="389"/>
        <end position="409"/>
    </location>
</feature>
<feature type="compositionally biased region" description="Polar residues" evidence="5">
    <location>
        <begin position="410"/>
        <end position="425"/>
    </location>
</feature>
<feature type="compositionally biased region" description="Low complexity" evidence="5">
    <location>
        <begin position="426"/>
        <end position="438"/>
    </location>
</feature>
<feature type="compositionally biased region" description="Low complexity" evidence="5">
    <location>
        <begin position="447"/>
        <end position="456"/>
    </location>
</feature>
<feature type="site" description="Arginine finger; crucial for GTP hydrolysis by stabilizing the transition state" evidence="4">
    <location>
        <position position="616"/>
    </location>
</feature>
<organism>
    <name type="scientific">Dictyostelium discoideum</name>
    <name type="common">Social amoeba</name>
    <dbReference type="NCBI Taxonomy" id="44689"/>
    <lineage>
        <taxon>Eukaryota</taxon>
        <taxon>Amoebozoa</taxon>
        <taxon>Evosea</taxon>
        <taxon>Eumycetozoa</taxon>
        <taxon>Dictyostelia</taxon>
        <taxon>Dictyosteliales</taxon>
        <taxon>Dictyosteliaceae</taxon>
        <taxon>Dictyostelium</taxon>
    </lineage>
</organism>
<accession>Q54Y08</accession>
<name>NGAP_DICDI</name>
<protein>
    <recommendedName>
        <fullName>Probable Ras GTPase-activating-like protein ngap</fullName>
        <shortName>DdNGAP</shortName>
    </recommendedName>
</protein>
<proteinExistence type="evidence at transcript level"/>
<keyword id="KW-0175">Coiled coil</keyword>
<keyword id="KW-0343">GTPase activation</keyword>
<keyword id="KW-1185">Reference proteome</keyword>
<sequence>MMESLTVNENTINEFEIKNDIIIEQQQIQSKTSIPLLNIKDGNTTTTNTINEINNNNNNIETSTMSRKSLMTPSATYESLIRQQKTKDCNLTVKVFEARNLIEARLRKREMVKNGKSFKRAQNLLTEISSPNLMTFSDTTDPYCTVQLEKQKQRTRTIPKKLNPFWCEEFQLEISDPASAKLVLSVMDEKKYSNDEHIGKLVIPINTLKDQKERELWFPLTQPQSSKKVPQIQILFNFKPISLTDPSQPGHIQWKVLFGRNLSHSLATPLPSMSAASMGGSTSTENISNVYTNTTPFINWSVRSKKGDIVIDEEGIAWQDALTNGITRELKDSIECITFTLWRYEPKTFSDDGDISGLKSPRGTNSSASGSGFIPSTPPPSSHQKSNDTTATTTPSSTPSTPISPSSQSNNIKTPDSKTRSSSNASTNTPQTTPKSTGTSGGPAPPETINLSSSINSTSSLISNGSINVIDSSNNLHHHHNNGTNIMNPLKDGYEQYFIGQGIVLASHIDIEKPNDQWLCLYPKQTLDNKFGDIRLKLKYSEEVVLPLQSYQPLLELLQQENLYTITLLGKVTKHRESVSNNLIRVFEKTGKCLYLLKSLTDHEIDSTNNPDIIFRGNSLATKSVDLFMKLIGIPYLSQTIGPLIKKIYSSKKSCEIDPTKLEKGEDIKKNCKNLLSWVKKMTTAILSSVNNCPGPLREVFKSIQDKVVQRYPKDEITRYTAVSGFIFLRFFCPAILAPKLFDLMPDHPGIKTTRSLILIAKTLQNLANQVEFGEYKEDFMKDMNRFVIDNMENMKSFINTLSTVPADCPPGALQSPIILEKELACLYRHLIKQRQDMAEEMESTESEPKTQQEKDSFGKLIKILNSLDEDVQLASN</sequence>
<dbReference type="EMBL" id="AAFI02000023">
    <property type="protein sequence ID" value="EAL68414.1"/>
    <property type="molecule type" value="Genomic_DNA"/>
</dbReference>
<dbReference type="RefSeq" id="XP_642394.1">
    <property type="nucleotide sequence ID" value="XM_637302.1"/>
</dbReference>
<dbReference type="SMR" id="Q54Y08"/>
<dbReference type="FunCoup" id="Q54Y08">
    <property type="interactions" value="8"/>
</dbReference>
<dbReference type="STRING" id="44689.Q54Y08"/>
<dbReference type="GlyGen" id="Q54Y08">
    <property type="glycosylation" value="1 site"/>
</dbReference>
<dbReference type="PaxDb" id="44689-DDB0220496"/>
<dbReference type="EnsemblProtists" id="EAL68414">
    <property type="protein sequence ID" value="EAL68414"/>
    <property type="gene ID" value="DDB_G0278483"/>
</dbReference>
<dbReference type="GeneID" id="8621599"/>
<dbReference type="KEGG" id="ddi:DDB_G0278483"/>
<dbReference type="dictyBase" id="DDB_G0278483">
    <property type="gene designation" value="ngap"/>
</dbReference>
<dbReference type="VEuPathDB" id="AmoebaDB:DDB_G0278483"/>
<dbReference type="eggNOG" id="KOG1032">
    <property type="taxonomic scope" value="Eukaryota"/>
</dbReference>
<dbReference type="eggNOG" id="KOG2059">
    <property type="taxonomic scope" value="Eukaryota"/>
</dbReference>
<dbReference type="HOGENOM" id="CLU_328024_0_0_1"/>
<dbReference type="InParanoid" id="Q54Y08"/>
<dbReference type="OMA" id="LMPDHPG"/>
<dbReference type="Reactome" id="R-DDI-5658442">
    <property type="pathway name" value="Regulation of RAS by GAPs"/>
</dbReference>
<dbReference type="PRO" id="PR:Q54Y08"/>
<dbReference type="Proteomes" id="UP000002195">
    <property type="component" value="Chromosome 3"/>
</dbReference>
<dbReference type="GO" id="GO:0005813">
    <property type="term" value="C:centrosome"/>
    <property type="evidence" value="ECO:0000304"/>
    <property type="project" value="dictyBase"/>
</dbReference>
<dbReference type="GO" id="GO:0005829">
    <property type="term" value="C:cytosol"/>
    <property type="evidence" value="ECO:0000314"/>
    <property type="project" value="dictyBase"/>
</dbReference>
<dbReference type="GO" id="GO:0031256">
    <property type="term" value="C:leading edge membrane"/>
    <property type="evidence" value="ECO:0000314"/>
    <property type="project" value="dictyBase"/>
</dbReference>
<dbReference type="GO" id="GO:0005096">
    <property type="term" value="F:GTPase activator activity"/>
    <property type="evidence" value="ECO:0000315"/>
    <property type="project" value="dictyBase"/>
</dbReference>
<dbReference type="GO" id="GO:0005543">
    <property type="term" value="F:phospholipid binding"/>
    <property type="evidence" value="ECO:0000314"/>
    <property type="project" value="dictyBase"/>
</dbReference>
<dbReference type="GO" id="GO:0046580">
    <property type="term" value="P:negative regulation of Ras protein signal transduction"/>
    <property type="evidence" value="ECO:0000315"/>
    <property type="project" value="dictyBase"/>
</dbReference>
<dbReference type="GO" id="GO:0051592">
    <property type="term" value="P:response to calcium ion"/>
    <property type="evidence" value="ECO:0000315"/>
    <property type="project" value="dictyBase"/>
</dbReference>
<dbReference type="CDD" id="cd00030">
    <property type="entry name" value="C2"/>
    <property type="match status" value="1"/>
</dbReference>
<dbReference type="CDD" id="cd05128">
    <property type="entry name" value="RasGAP_GAP1_like"/>
    <property type="match status" value="1"/>
</dbReference>
<dbReference type="Gene3D" id="2.60.40.150">
    <property type="entry name" value="C2 domain"/>
    <property type="match status" value="1"/>
</dbReference>
<dbReference type="Gene3D" id="1.10.506.10">
    <property type="entry name" value="GTPase Activation - p120gap, domain 1"/>
    <property type="match status" value="2"/>
</dbReference>
<dbReference type="InterPro" id="IPR000008">
    <property type="entry name" value="C2_dom"/>
</dbReference>
<dbReference type="InterPro" id="IPR035892">
    <property type="entry name" value="C2_domain_sf"/>
</dbReference>
<dbReference type="InterPro" id="IPR039360">
    <property type="entry name" value="Ras_GTPase"/>
</dbReference>
<dbReference type="InterPro" id="IPR023152">
    <property type="entry name" value="RasGAP_CS"/>
</dbReference>
<dbReference type="InterPro" id="IPR001936">
    <property type="entry name" value="RasGAP_dom"/>
</dbReference>
<dbReference type="InterPro" id="IPR008936">
    <property type="entry name" value="Rho_GTPase_activation_prot"/>
</dbReference>
<dbReference type="PANTHER" id="PTHR10194:SF60">
    <property type="entry name" value="RAS GTPASE-ACTIVATING PROTEIN RASKOL"/>
    <property type="match status" value="1"/>
</dbReference>
<dbReference type="PANTHER" id="PTHR10194">
    <property type="entry name" value="RAS GTPASE-ACTIVATING PROTEINS"/>
    <property type="match status" value="1"/>
</dbReference>
<dbReference type="Pfam" id="PF00168">
    <property type="entry name" value="C2"/>
    <property type="match status" value="1"/>
</dbReference>
<dbReference type="Pfam" id="PF00616">
    <property type="entry name" value="RasGAP"/>
    <property type="match status" value="1"/>
</dbReference>
<dbReference type="SMART" id="SM00239">
    <property type="entry name" value="C2"/>
    <property type="match status" value="1"/>
</dbReference>
<dbReference type="SMART" id="SM00323">
    <property type="entry name" value="RasGAP"/>
    <property type="match status" value="1"/>
</dbReference>
<dbReference type="SUPFAM" id="SSF49562">
    <property type="entry name" value="C2 domain (Calcium/lipid-binding domain, CaLB)"/>
    <property type="match status" value="1"/>
</dbReference>
<dbReference type="SUPFAM" id="SSF48350">
    <property type="entry name" value="GTPase activation domain, GAP"/>
    <property type="match status" value="1"/>
</dbReference>
<dbReference type="PROSITE" id="PS50004">
    <property type="entry name" value="C2"/>
    <property type="match status" value="1"/>
</dbReference>
<dbReference type="PROSITE" id="PS00509">
    <property type="entry name" value="RAS_GTPASE_ACTIV_1"/>
    <property type="match status" value="1"/>
</dbReference>
<dbReference type="PROSITE" id="PS50018">
    <property type="entry name" value="RAS_GTPASE_ACTIV_2"/>
    <property type="match status" value="1"/>
</dbReference>